<comment type="function">
    <text evidence="3">Catalyzes the oxidative phosphorylation of glyceraldehyde 3-phosphate (G3P) to 1,3-bisphosphoglycerate (BPG) using the cofactor NAD. The first reaction step involves the formation of a hemiacetal intermediate between G3P and a cysteine residue, and this hemiacetal intermediate is then oxidized to a thioester, with concomitant reduction of NAD to NADH. The reduced NADH is then exchanged with the second NAD, and the thioester is attacked by a nucleophilic inorganic phosphate to produce BPG.</text>
</comment>
<comment type="catalytic activity">
    <reaction evidence="3">
        <text>D-glyceraldehyde 3-phosphate + phosphate + NAD(+) = (2R)-3-phospho-glyceroyl phosphate + NADH + H(+)</text>
        <dbReference type="Rhea" id="RHEA:10300"/>
        <dbReference type="ChEBI" id="CHEBI:15378"/>
        <dbReference type="ChEBI" id="CHEBI:43474"/>
        <dbReference type="ChEBI" id="CHEBI:57540"/>
        <dbReference type="ChEBI" id="CHEBI:57604"/>
        <dbReference type="ChEBI" id="CHEBI:57945"/>
        <dbReference type="ChEBI" id="CHEBI:59776"/>
        <dbReference type="EC" id="1.2.1.12"/>
    </reaction>
</comment>
<comment type="pathway">
    <text evidence="4">Carbohydrate degradation; glycolysis; pyruvate from D-glyceraldehyde 3-phosphate: step 1/5.</text>
</comment>
<comment type="subunit">
    <text evidence="2">Homotetramer.</text>
</comment>
<comment type="subcellular location">
    <subcellularLocation>
        <location evidence="4">Cytoplasm</location>
    </subcellularLocation>
</comment>
<comment type="similarity">
    <text evidence="4">Belongs to the glyceraldehyde-3-phosphate dehydrogenase family.</text>
</comment>
<protein>
    <recommendedName>
        <fullName evidence="3">Glyceraldehyde-3-phosphate dehydrogenase</fullName>
        <shortName evidence="3">GAPDH</shortName>
        <ecNumber evidence="3">1.2.1.12</ecNumber>
    </recommendedName>
    <alternativeName>
        <fullName evidence="3">NAD-dependent glyceraldehyde-3-phosphate dehydrogenase</fullName>
    </alternativeName>
</protein>
<dbReference type="EC" id="1.2.1.12" evidence="3"/>
<dbReference type="EMBL" id="X59403">
    <property type="protein sequence ID" value="CAA42045.1"/>
    <property type="molecule type" value="Genomic_DNA"/>
</dbReference>
<dbReference type="EMBL" id="BA000036">
    <property type="protein sequence ID" value="BAB98981.1"/>
    <property type="molecule type" value="Genomic_DNA"/>
</dbReference>
<dbReference type="EMBL" id="BX927152">
    <property type="protein sequence ID" value="CAF21596.1"/>
    <property type="molecule type" value="Genomic_DNA"/>
</dbReference>
<dbReference type="PIR" id="A43260">
    <property type="entry name" value="A43260"/>
</dbReference>
<dbReference type="RefSeq" id="NP_600802.1">
    <property type="nucleotide sequence ID" value="NC_003450.3"/>
</dbReference>
<dbReference type="RefSeq" id="WP_003862250.1">
    <property type="nucleotide sequence ID" value="NC_006958.1"/>
</dbReference>
<dbReference type="PDB" id="8HRO">
    <property type="method" value="X-ray"/>
    <property type="resolution" value="2.59 A"/>
    <property type="chains" value="A/B=1-334"/>
</dbReference>
<dbReference type="PDB" id="8HRP">
    <property type="method" value="X-ray"/>
    <property type="resolution" value="1.99 A"/>
    <property type="chains" value="A/B/C/D/E/F/G/H=1-334"/>
</dbReference>
<dbReference type="PDB" id="8HRQ">
    <property type="method" value="X-ray"/>
    <property type="resolution" value="2.09 A"/>
    <property type="chains" value="A/B=1-334"/>
</dbReference>
<dbReference type="PDB" id="8HRR">
    <property type="method" value="X-ray"/>
    <property type="resolution" value="2.00 A"/>
    <property type="chains" value="A/B=1-334"/>
</dbReference>
<dbReference type="PDB" id="8HRS">
    <property type="method" value="X-ray"/>
    <property type="resolution" value="2.00 A"/>
    <property type="chains" value="A/B/C/D=1-334"/>
</dbReference>
<dbReference type="PDB" id="8HRT">
    <property type="method" value="X-ray"/>
    <property type="resolution" value="1.99 A"/>
    <property type="chains" value="A/B/C/D=1-334"/>
</dbReference>
<dbReference type="PDBsum" id="8HRO"/>
<dbReference type="PDBsum" id="8HRP"/>
<dbReference type="PDBsum" id="8HRQ"/>
<dbReference type="PDBsum" id="8HRR"/>
<dbReference type="PDBsum" id="8HRS"/>
<dbReference type="PDBsum" id="8HRT"/>
<dbReference type="SMR" id="Q01651"/>
<dbReference type="STRING" id="196627.cg1791"/>
<dbReference type="GeneID" id="1019556"/>
<dbReference type="KEGG" id="cgb:cg1791"/>
<dbReference type="KEGG" id="cgl:Cgl1588"/>
<dbReference type="PATRIC" id="fig|196627.13.peg.1550"/>
<dbReference type="eggNOG" id="COG0057">
    <property type="taxonomic scope" value="Bacteria"/>
</dbReference>
<dbReference type="HOGENOM" id="CLU_030140_0_2_11"/>
<dbReference type="OrthoDB" id="9803304at2"/>
<dbReference type="BioCyc" id="CORYNE:G18NG-11173-MONOMER"/>
<dbReference type="BRENDA" id="1.2.1.12">
    <property type="organism ID" value="960"/>
</dbReference>
<dbReference type="BRENDA" id="1.2.1.59">
    <property type="organism ID" value="960"/>
</dbReference>
<dbReference type="UniPathway" id="UPA00109">
    <property type="reaction ID" value="UER00184"/>
</dbReference>
<dbReference type="Proteomes" id="UP000000582">
    <property type="component" value="Chromosome"/>
</dbReference>
<dbReference type="Proteomes" id="UP000001009">
    <property type="component" value="Chromosome"/>
</dbReference>
<dbReference type="GO" id="GO:0005737">
    <property type="term" value="C:cytoplasm"/>
    <property type="evidence" value="ECO:0007669"/>
    <property type="project" value="UniProtKB-SubCell"/>
</dbReference>
<dbReference type="GO" id="GO:0004365">
    <property type="term" value="F:glyceraldehyde-3-phosphate dehydrogenase (NAD+) (phosphorylating) activity"/>
    <property type="evidence" value="ECO:0000250"/>
    <property type="project" value="UniProtKB"/>
</dbReference>
<dbReference type="GO" id="GO:0051287">
    <property type="term" value="F:NAD binding"/>
    <property type="evidence" value="ECO:0000250"/>
    <property type="project" value="UniProtKB"/>
</dbReference>
<dbReference type="GO" id="GO:0050661">
    <property type="term" value="F:NADP binding"/>
    <property type="evidence" value="ECO:0007669"/>
    <property type="project" value="InterPro"/>
</dbReference>
<dbReference type="GO" id="GO:0006006">
    <property type="term" value="P:glucose metabolic process"/>
    <property type="evidence" value="ECO:0007669"/>
    <property type="project" value="InterPro"/>
</dbReference>
<dbReference type="GO" id="GO:0006096">
    <property type="term" value="P:glycolytic process"/>
    <property type="evidence" value="ECO:0007669"/>
    <property type="project" value="UniProtKB-UniPathway"/>
</dbReference>
<dbReference type="CDD" id="cd18126">
    <property type="entry name" value="GAPDH_I_C"/>
    <property type="match status" value="1"/>
</dbReference>
<dbReference type="CDD" id="cd05214">
    <property type="entry name" value="GAPDH_I_N"/>
    <property type="match status" value="1"/>
</dbReference>
<dbReference type="FunFam" id="3.30.360.10:FF:000002">
    <property type="entry name" value="Glyceraldehyde-3-phosphate dehydrogenase"/>
    <property type="match status" value="1"/>
</dbReference>
<dbReference type="FunFam" id="3.40.50.720:FF:000001">
    <property type="entry name" value="Glyceraldehyde-3-phosphate dehydrogenase"/>
    <property type="match status" value="1"/>
</dbReference>
<dbReference type="Gene3D" id="3.30.360.10">
    <property type="entry name" value="Dihydrodipicolinate Reductase, domain 2"/>
    <property type="match status" value="1"/>
</dbReference>
<dbReference type="Gene3D" id="3.40.50.720">
    <property type="entry name" value="NAD(P)-binding Rossmann-like Domain"/>
    <property type="match status" value="1"/>
</dbReference>
<dbReference type="InterPro" id="IPR020831">
    <property type="entry name" value="GlycerAld/Erythrose_P_DH"/>
</dbReference>
<dbReference type="InterPro" id="IPR020830">
    <property type="entry name" value="GlycerAld_3-P_DH_AS"/>
</dbReference>
<dbReference type="InterPro" id="IPR020829">
    <property type="entry name" value="GlycerAld_3-P_DH_cat"/>
</dbReference>
<dbReference type="InterPro" id="IPR020828">
    <property type="entry name" value="GlycerAld_3-P_DH_NAD(P)-bd"/>
</dbReference>
<dbReference type="InterPro" id="IPR006424">
    <property type="entry name" value="Glyceraldehyde-3-P_DH_1"/>
</dbReference>
<dbReference type="InterPro" id="IPR036291">
    <property type="entry name" value="NAD(P)-bd_dom_sf"/>
</dbReference>
<dbReference type="NCBIfam" id="TIGR01534">
    <property type="entry name" value="GAPDH-I"/>
    <property type="match status" value="1"/>
</dbReference>
<dbReference type="PANTHER" id="PTHR43148">
    <property type="entry name" value="GLYCERALDEHYDE-3-PHOSPHATE DEHYDROGENASE 2"/>
    <property type="match status" value="1"/>
</dbReference>
<dbReference type="Pfam" id="PF02800">
    <property type="entry name" value="Gp_dh_C"/>
    <property type="match status" value="1"/>
</dbReference>
<dbReference type="Pfam" id="PF00044">
    <property type="entry name" value="Gp_dh_N"/>
    <property type="match status" value="1"/>
</dbReference>
<dbReference type="PIRSF" id="PIRSF000149">
    <property type="entry name" value="GAP_DH"/>
    <property type="match status" value="1"/>
</dbReference>
<dbReference type="PRINTS" id="PR00078">
    <property type="entry name" value="G3PDHDRGNASE"/>
</dbReference>
<dbReference type="SMART" id="SM00846">
    <property type="entry name" value="Gp_dh_N"/>
    <property type="match status" value="1"/>
</dbReference>
<dbReference type="SUPFAM" id="SSF55347">
    <property type="entry name" value="Glyceraldehyde-3-phosphate dehydrogenase-like, C-terminal domain"/>
    <property type="match status" value="1"/>
</dbReference>
<dbReference type="SUPFAM" id="SSF51735">
    <property type="entry name" value="NAD(P)-binding Rossmann-fold domains"/>
    <property type="match status" value="1"/>
</dbReference>
<dbReference type="PROSITE" id="PS00071">
    <property type="entry name" value="GAPDH"/>
    <property type="match status" value="1"/>
</dbReference>
<reference key="1">
    <citation type="journal article" date="1992" name="J. Bacteriol.">
        <title>Identification, sequence analysis, and expression of a Corynebacterium glutamicum gene cluster encoding the three glycolytic enzymes glyceraldehyde-3-phosphate dehydrogenase, 3-phosphoglycerate kinase, and triosephosphate isomerase.</title>
        <authorList>
            <person name="Eikmanns B.J."/>
        </authorList>
    </citation>
    <scope>NUCLEOTIDE SEQUENCE [GENOMIC DNA]</scope>
    <source>
        <strain>ATCC 13059 / LMG 3658 / NCIB 10332 / AS019 / 613</strain>
    </source>
</reference>
<reference key="2">
    <citation type="journal article" date="2003" name="Appl. Microbiol. Biotechnol.">
        <title>The Corynebacterium glutamicum genome: features and impacts on biotechnological processes.</title>
        <authorList>
            <person name="Ikeda M."/>
            <person name="Nakagawa S."/>
        </authorList>
    </citation>
    <scope>NUCLEOTIDE SEQUENCE [LARGE SCALE GENOMIC DNA]</scope>
    <source>
        <strain>ATCC 13032 / DSM 20300 / JCM 1318 / BCRC 11384 / CCUG 27702 / LMG 3730 / NBRC 12168 / NCIMB 10025 / NRRL B-2784 / 534</strain>
    </source>
</reference>
<reference key="3">
    <citation type="journal article" date="2003" name="J. Biotechnol.">
        <title>The complete Corynebacterium glutamicum ATCC 13032 genome sequence and its impact on the production of L-aspartate-derived amino acids and vitamins.</title>
        <authorList>
            <person name="Kalinowski J."/>
            <person name="Bathe B."/>
            <person name="Bartels D."/>
            <person name="Bischoff N."/>
            <person name="Bott M."/>
            <person name="Burkovski A."/>
            <person name="Dusch N."/>
            <person name="Eggeling L."/>
            <person name="Eikmanns B.J."/>
            <person name="Gaigalat L."/>
            <person name="Goesmann A."/>
            <person name="Hartmann M."/>
            <person name="Huthmacher K."/>
            <person name="Kraemer R."/>
            <person name="Linke B."/>
            <person name="McHardy A.C."/>
            <person name="Meyer F."/>
            <person name="Moeckel B."/>
            <person name="Pfefferle W."/>
            <person name="Puehler A."/>
            <person name="Rey D.A."/>
            <person name="Rueckert C."/>
            <person name="Rupp O."/>
            <person name="Sahm H."/>
            <person name="Wendisch V.F."/>
            <person name="Wiegraebe I."/>
            <person name="Tauch A."/>
        </authorList>
    </citation>
    <scope>NUCLEOTIDE SEQUENCE [LARGE SCALE GENOMIC DNA]</scope>
    <source>
        <strain>ATCC 13032 / DSM 20300 / JCM 1318 / BCRC 11384 / CCUG 27702 / LMG 3730 / NBRC 12168 / NCIMB 10025 / NRRL B-2784 / 534</strain>
    </source>
</reference>
<feature type="chain" id="PRO_0000145647" description="Glyceraldehyde-3-phosphate dehydrogenase">
    <location>
        <begin position="1"/>
        <end position="334"/>
    </location>
</feature>
<feature type="active site" description="Nucleophile" evidence="1">
    <location>
        <position position="153"/>
    </location>
</feature>
<feature type="binding site" evidence="1">
    <location>
        <begin position="12"/>
        <end position="13"/>
    </location>
    <ligand>
        <name>NAD(+)</name>
        <dbReference type="ChEBI" id="CHEBI:57540"/>
    </ligand>
</feature>
<feature type="binding site" evidence="1">
    <location>
        <position position="35"/>
    </location>
    <ligand>
        <name>NAD(+)</name>
        <dbReference type="ChEBI" id="CHEBI:57540"/>
    </ligand>
</feature>
<feature type="binding site" evidence="1">
    <location>
        <position position="79"/>
    </location>
    <ligand>
        <name>NAD(+)</name>
        <dbReference type="ChEBI" id="CHEBI:57540"/>
    </ligand>
</feature>
<feature type="binding site" evidence="1">
    <location>
        <position position="121"/>
    </location>
    <ligand>
        <name>NAD(+)</name>
        <dbReference type="ChEBI" id="CHEBI:57540"/>
    </ligand>
</feature>
<feature type="binding site" evidence="1">
    <location>
        <begin position="152"/>
        <end position="154"/>
    </location>
    <ligand>
        <name>D-glyceraldehyde 3-phosphate</name>
        <dbReference type="ChEBI" id="CHEBI:59776"/>
    </ligand>
</feature>
<feature type="binding site" evidence="1">
    <location>
        <position position="183"/>
    </location>
    <ligand>
        <name>D-glyceraldehyde 3-phosphate</name>
        <dbReference type="ChEBI" id="CHEBI:59776"/>
    </ligand>
</feature>
<feature type="binding site" evidence="1">
    <location>
        <position position="198"/>
    </location>
    <ligand>
        <name>D-glyceraldehyde 3-phosphate</name>
        <dbReference type="ChEBI" id="CHEBI:59776"/>
    </ligand>
</feature>
<feature type="binding site" evidence="1">
    <location>
        <begin position="211"/>
        <end position="212"/>
    </location>
    <ligand>
        <name>D-glyceraldehyde 3-phosphate</name>
        <dbReference type="ChEBI" id="CHEBI:59776"/>
    </ligand>
</feature>
<feature type="binding site" evidence="1">
    <location>
        <position position="234"/>
    </location>
    <ligand>
        <name>D-glyceraldehyde 3-phosphate</name>
        <dbReference type="ChEBI" id="CHEBI:59776"/>
    </ligand>
</feature>
<feature type="binding site" evidence="1">
    <location>
        <position position="315"/>
    </location>
    <ligand>
        <name>NAD(+)</name>
        <dbReference type="ChEBI" id="CHEBI:57540"/>
    </ligand>
</feature>
<feature type="site" description="Activates thiol group during catalysis" evidence="1">
    <location>
        <position position="180"/>
    </location>
</feature>
<feature type="sequence conflict" description="In Ref. 1; CAA42045." evidence="4" ref="1">
    <original>SD</original>
    <variation>NG</variation>
    <location>
        <begin position="25"/>
        <end position="26"/>
    </location>
</feature>
<feature type="sequence conflict" description="In Ref. 1; CAA42045." evidence="4" ref="1">
    <original>KL</original>
    <variation>QALN</variation>
    <location>
        <begin position="333"/>
        <end position="334"/>
    </location>
</feature>
<keyword id="KW-0002">3D-structure</keyword>
<keyword id="KW-0963">Cytoplasm</keyword>
<keyword id="KW-0324">Glycolysis</keyword>
<keyword id="KW-0520">NAD</keyword>
<keyword id="KW-0547">Nucleotide-binding</keyword>
<keyword id="KW-0560">Oxidoreductase</keyword>
<keyword id="KW-1185">Reference proteome</keyword>
<proteinExistence type="evidence at protein level"/>
<accession>Q01651</accession>
<name>G3P_CORGL</name>
<gene>
    <name type="primary">gap</name>
    <name type="ordered locus">Cgl1588</name>
    <name type="ordered locus">cg1791</name>
</gene>
<sequence length="334" mass="36046">MTIRVGINGFGRIGRNFFRAVLERSDDLEVVAVNDLTDNKTLSTLLKFDSIMGRLGQEVEYDDDSITVGGKRIAVYAERDPKNLDWAAHNVDIVIESTGFFTDANAAKAHIEAGAKKVIISAPASNEDATFVYGVNHESYDPENHNVISGASCTTNCLAPMAKVLNDKFGIENGLMTTVHAYTGDQRLHDAPHRDLRRARAAAVNIVPTSTGAAKAVALVLPELKGKLDGYALRVPVITGSATDLTFNTKSEVTVESINAAIKEAAVGEFGETLAYSEEPLVSTDIVHDSHGSIFDAGLTKVSGNTVKVVSWYDNEWGYTCQLLRLTELVASKL</sequence>
<evidence type="ECO:0000250" key="1">
    <source>
        <dbReference type="UniProtKB" id="P00362"/>
    </source>
</evidence>
<evidence type="ECO:0000250" key="2">
    <source>
        <dbReference type="UniProtKB" id="P54226"/>
    </source>
</evidence>
<evidence type="ECO:0000250" key="3">
    <source>
        <dbReference type="UniProtKB" id="P9WN83"/>
    </source>
</evidence>
<evidence type="ECO:0000305" key="4"/>
<organism>
    <name type="scientific">Corynebacterium glutamicum (strain ATCC 13032 / DSM 20300 / JCM 1318 / BCRC 11384 / CCUG 27702 / LMG 3730 / NBRC 12168 / NCIMB 10025 / NRRL B-2784 / 534)</name>
    <dbReference type="NCBI Taxonomy" id="196627"/>
    <lineage>
        <taxon>Bacteria</taxon>
        <taxon>Bacillati</taxon>
        <taxon>Actinomycetota</taxon>
        <taxon>Actinomycetes</taxon>
        <taxon>Mycobacteriales</taxon>
        <taxon>Corynebacteriaceae</taxon>
        <taxon>Corynebacterium</taxon>
    </lineage>
</organism>